<sequence>MGFADFFKTFTRERAKEGESPSHWIKCPSCSALMYYKEVIAQHHVCPKCNFHMRIALEDRIEMLCDEGTLIEHDASLEPTDPLTFVDKKSYKKRIEEGKQKTGRASSVLSGECRINGVSTQIVLFNFAFMGGSLGSVEGEKIVRAVNRALEKHQGLVILSTSGGARMQESTYSLMQMAKTSAALARLSQAKLPFISLLTDPTMGGVSASFAFLGDIIIAEPGAMVGFAGARVIKQTIGADLPEGFQTAEFLLEHGLIDMITPRKEMKKTLGDLLRFFNPYDENPCLLHL</sequence>
<comment type="function">
    <text evidence="1">Component of the acetyl coenzyme A carboxylase (ACC) complex. Biotin carboxylase (BC) catalyzes the carboxylation of biotin on its carrier protein (BCCP) and then the CO(2) group is transferred by the transcarboxylase to acetyl-CoA to form malonyl-CoA.</text>
</comment>
<comment type="catalytic activity">
    <reaction evidence="1">
        <text>N(6)-carboxybiotinyl-L-lysyl-[protein] + acetyl-CoA = N(6)-biotinyl-L-lysyl-[protein] + malonyl-CoA</text>
        <dbReference type="Rhea" id="RHEA:54728"/>
        <dbReference type="Rhea" id="RHEA-COMP:10505"/>
        <dbReference type="Rhea" id="RHEA-COMP:10506"/>
        <dbReference type="ChEBI" id="CHEBI:57288"/>
        <dbReference type="ChEBI" id="CHEBI:57384"/>
        <dbReference type="ChEBI" id="CHEBI:83144"/>
        <dbReference type="ChEBI" id="CHEBI:83145"/>
        <dbReference type="EC" id="2.1.3.15"/>
    </reaction>
</comment>
<comment type="cofactor">
    <cofactor evidence="1">
        <name>Zn(2+)</name>
        <dbReference type="ChEBI" id="CHEBI:29105"/>
    </cofactor>
    <text evidence="1">Binds 1 zinc ion per subunit.</text>
</comment>
<comment type="pathway">
    <text evidence="1">Lipid metabolism; malonyl-CoA biosynthesis; malonyl-CoA from acetyl-CoA: step 1/1.</text>
</comment>
<comment type="subunit">
    <text evidence="1">Acetyl-CoA carboxylase is a heterohexamer composed of biotin carboxyl carrier protein (AccB), biotin carboxylase (AccC) and two subunits each of ACCase subunit alpha (AccA) and ACCase subunit beta (AccD).</text>
</comment>
<comment type="subcellular location">
    <subcellularLocation>
        <location evidence="1">Cytoplasm</location>
    </subcellularLocation>
</comment>
<comment type="similarity">
    <text evidence="1">Belongs to the AccD/PCCB family.</text>
</comment>
<feature type="chain" id="PRO_0000389898" description="Acetyl-coenzyme A carboxylase carboxyl transferase subunit beta">
    <location>
        <begin position="1"/>
        <end position="289"/>
    </location>
</feature>
<feature type="domain" description="CoA carboxyltransferase N-terminal" evidence="2">
    <location>
        <begin position="23"/>
        <end position="289"/>
    </location>
</feature>
<feature type="zinc finger region" description="C4-type" evidence="1">
    <location>
        <begin position="27"/>
        <end position="49"/>
    </location>
</feature>
<feature type="binding site" evidence="1">
    <location>
        <position position="27"/>
    </location>
    <ligand>
        <name>Zn(2+)</name>
        <dbReference type="ChEBI" id="CHEBI:29105"/>
    </ligand>
</feature>
<feature type="binding site" evidence="1">
    <location>
        <position position="30"/>
    </location>
    <ligand>
        <name>Zn(2+)</name>
        <dbReference type="ChEBI" id="CHEBI:29105"/>
    </ligand>
</feature>
<feature type="binding site" evidence="1">
    <location>
        <position position="46"/>
    </location>
    <ligand>
        <name>Zn(2+)</name>
        <dbReference type="ChEBI" id="CHEBI:29105"/>
    </ligand>
</feature>
<feature type="binding site" evidence="1">
    <location>
        <position position="49"/>
    </location>
    <ligand>
        <name>Zn(2+)</name>
        <dbReference type="ChEBI" id="CHEBI:29105"/>
    </ligand>
</feature>
<evidence type="ECO:0000255" key="1">
    <source>
        <dbReference type="HAMAP-Rule" id="MF_01395"/>
    </source>
</evidence>
<evidence type="ECO:0000255" key="2">
    <source>
        <dbReference type="PROSITE-ProRule" id="PRU01136"/>
    </source>
</evidence>
<keyword id="KW-0067">ATP-binding</keyword>
<keyword id="KW-0963">Cytoplasm</keyword>
<keyword id="KW-0275">Fatty acid biosynthesis</keyword>
<keyword id="KW-0276">Fatty acid metabolism</keyword>
<keyword id="KW-0444">Lipid biosynthesis</keyword>
<keyword id="KW-0443">Lipid metabolism</keyword>
<keyword id="KW-0479">Metal-binding</keyword>
<keyword id="KW-0547">Nucleotide-binding</keyword>
<keyword id="KW-1185">Reference proteome</keyword>
<keyword id="KW-0808">Transferase</keyword>
<keyword id="KW-0862">Zinc</keyword>
<keyword id="KW-0863">Zinc-finger</keyword>
<organism>
    <name type="scientific">Wolinella succinogenes (strain ATCC 29543 / DSM 1740 / CCUG 13145 / JCM 31913 / LMG 7466 / NCTC 11488 / FDC 602W)</name>
    <name type="common">Vibrio succinogenes</name>
    <dbReference type="NCBI Taxonomy" id="273121"/>
    <lineage>
        <taxon>Bacteria</taxon>
        <taxon>Pseudomonadati</taxon>
        <taxon>Campylobacterota</taxon>
        <taxon>Epsilonproteobacteria</taxon>
        <taxon>Campylobacterales</taxon>
        <taxon>Helicobacteraceae</taxon>
        <taxon>Wolinella</taxon>
    </lineage>
</organism>
<gene>
    <name evidence="1" type="primary">accD</name>
    <name type="ordered locus">WS0157</name>
</gene>
<protein>
    <recommendedName>
        <fullName evidence="1">Acetyl-coenzyme A carboxylase carboxyl transferase subunit beta</fullName>
        <shortName evidence="1">ACCase subunit beta</shortName>
        <shortName evidence="1">Acetyl-CoA carboxylase carboxyltransferase subunit beta</shortName>
        <ecNumber evidence="1">2.1.3.15</ecNumber>
    </recommendedName>
</protein>
<dbReference type="EC" id="2.1.3.15" evidence="1"/>
<dbReference type="EMBL" id="BX571657">
    <property type="protein sequence ID" value="CAE09320.1"/>
    <property type="molecule type" value="Genomic_DNA"/>
</dbReference>
<dbReference type="RefSeq" id="WP_011138120.1">
    <property type="nucleotide sequence ID" value="NC_005090.1"/>
</dbReference>
<dbReference type="SMR" id="Q7MAM0"/>
<dbReference type="STRING" id="273121.WS0157"/>
<dbReference type="KEGG" id="wsu:WS0157"/>
<dbReference type="eggNOG" id="COG0777">
    <property type="taxonomic scope" value="Bacteria"/>
</dbReference>
<dbReference type="HOGENOM" id="CLU_015486_1_0_7"/>
<dbReference type="UniPathway" id="UPA00655">
    <property type="reaction ID" value="UER00711"/>
</dbReference>
<dbReference type="Proteomes" id="UP000000422">
    <property type="component" value="Chromosome"/>
</dbReference>
<dbReference type="GO" id="GO:0009329">
    <property type="term" value="C:acetate CoA-transferase complex"/>
    <property type="evidence" value="ECO:0007669"/>
    <property type="project" value="TreeGrafter"/>
</dbReference>
<dbReference type="GO" id="GO:0003989">
    <property type="term" value="F:acetyl-CoA carboxylase activity"/>
    <property type="evidence" value="ECO:0007669"/>
    <property type="project" value="InterPro"/>
</dbReference>
<dbReference type="GO" id="GO:0005524">
    <property type="term" value="F:ATP binding"/>
    <property type="evidence" value="ECO:0007669"/>
    <property type="project" value="UniProtKB-KW"/>
</dbReference>
<dbReference type="GO" id="GO:0016743">
    <property type="term" value="F:carboxyl- or carbamoyltransferase activity"/>
    <property type="evidence" value="ECO:0007669"/>
    <property type="project" value="UniProtKB-UniRule"/>
</dbReference>
<dbReference type="GO" id="GO:0008270">
    <property type="term" value="F:zinc ion binding"/>
    <property type="evidence" value="ECO:0007669"/>
    <property type="project" value="UniProtKB-UniRule"/>
</dbReference>
<dbReference type="GO" id="GO:0006633">
    <property type="term" value="P:fatty acid biosynthetic process"/>
    <property type="evidence" value="ECO:0007669"/>
    <property type="project" value="UniProtKB-KW"/>
</dbReference>
<dbReference type="GO" id="GO:2001295">
    <property type="term" value="P:malonyl-CoA biosynthetic process"/>
    <property type="evidence" value="ECO:0007669"/>
    <property type="project" value="UniProtKB-UniRule"/>
</dbReference>
<dbReference type="Gene3D" id="3.90.226.10">
    <property type="entry name" value="2-enoyl-CoA Hydratase, Chain A, domain 1"/>
    <property type="match status" value="1"/>
</dbReference>
<dbReference type="HAMAP" id="MF_01395">
    <property type="entry name" value="AcetylCoA_CT_beta"/>
    <property type="match status" value="1"/>
</dbReference>
<dbReference type="InterPro" id="IPR034733">
    <property type="entry name" value="AcCoA_carboxyl_beta"/>
</dbReference>
<dbReference type="InterPro" id="IPR000438">
    <property type="entry name" value="Acetyl_CoA_COase_Trfase_b_su"/>
</dbReference>
<dbReference type="InterPro" id="IPR029045">
    <property type="entry name" value="ClpP/crotonase-like_dom_sf"/>
</dbReference>
<dbReference type="InterPro" id="IPR011762">
    <property type="entry name" value="COA_CT_N"/>
</dbReference>
<dbReference type="InterPro" id="IPR041010">
    <property type="entry name" value="Znf-ACC"/>
</dbReference>
<dbReference type="NCBIfam" id="TIGR00515">
    <property type="entry name" value="accD"/>
    <property type="match status" value="1"/>
</dbReference>
<dbReference type="PANTHER" id="PTHR42995">
    <property type="entry name" value="ACETYL-COENZYME A CARBOXYLASE CARBOXYL TRANSFERASE SUBUNIT BETA, CHLOROPLASTIC"/>
    <property type="match status" value="1"/>
</dbReference>
<dbReference type="PANTHER" id="PTHR42995:SF5">
    <property type="entry name" value="ACETYL-COENZYME A CARBOXYLASE CARBOXYL TRANSFERASE SUBUNIT BETA, CHLOROPLASTIC"/>
    <property type="match status" value="1"/>
</dbReference>
<dbReference type="Pfam" id="PF01039">
    <property type="entry name" value="Carboxyl_trans"/>
    <property type="match status" value="1"/>
</dbReference>
<dbReference type="Pfam" id="PF17848">
    <property type="entry name" value="Zn_ribbon_ACC"/>
    <property type="match status" value="1"/>
</dbReference>
<dbReference type="PRINTS" id="PR01070">
    <property type="entry name" value="ACCCTRFRASEB"/>
</dbReference>
<dbReference type="SUPFAM" id="SSF52096">
    <property type="entry name" value="ClpP/crotonase"/>
    <property type="match status" value="1"/>
</dbReference>
<dbReference type="PROSITE" id="PS50980">
    <property type="entry name" value="COA_CT_NTER"/>
    <property type="match status" value="1"/>
</dbReference>
<proteinExistence type="inferred from homology"/>
<accession>Q7MAM0</accession>
<name>ACCD_WOLSU</name>
<reference key="1">
    <citation type="journal article" date="2003" name="Proc. Natl. Acad. Sci. U.S.A.">
        <title>Complete genome sequence and analysis of Wolinella succinogenes.</title>
        <authorList>
            <person name="Baar C."/>
            <person name="Eppinger M."/>
            <person name="Raddatz G."/>
            <person name="Simon J."/>
            <person name="Lanz C."/>
            <person name="Klimmek O."/>
            <person name="Nandakumar R."/>
            <person name="Gross R."/>
            <person name="Rosinus A."/>
            <person name="Keller H."/>
            <person name="Jagtap P."/>
            <person name="Linke B."/>
            <person name="Meyer F."/>
            <person name="Lederer H."/>
            <person name="Schuster S.C."/>
        </authorList>
    </citation>
    <scope>NUCLEOTIDE SEQUENCE [LARGE SCALE GENOMIC DNA]</scope>
    <source>
        <strain>ATCC 29543 / DSM 1740 / CCUG 13145 / JCM 31913 / LMG 7466 / NCTC 11488 / FDC 602W</strain>
    </source>
</reference>